<accession>B3LGE9</accession>
<keyword id="KW-0028">Amino-acid biosynthesis</keyword>
<keyword id="KW-0057">Aromatic amino acid biosynthesis</keyword>
<keyword id="KW-0067">ATP-binding</keyword>
<keyword id="KW-0963">Cytoplasm</keyword>
<keyword id="KW-0418">Kinase</keyword>
<keyword id="KW-0456">Lyase</keyword>
<keyword id="KW-0479">Metal-binding</keyword>
<keyword id="KW-0511">Multifunctional enzyme</keyword>
<keyword id="KW-0521">NADP</keyword>
<keyword id="KW-0547">Nucleotide-binding</keyword>
<keyword id="KW-0560">Oxidoreductase</keyword>
<keyword id="KW-0808">Transferase</keyword>
<keyword id="KW-0862">Zinc</keyword>
<gene>
    <name evidence="1" type="primary">ARO1</name>
    <name type="ORF">SCRG_00391</name>
</gene>
<evidence type="ECO:0000255" key="1">
    <source>
        <dbReference type="HAMAP-Rule" id="MF_03143"/>
    </source>
</evidence>
<feature type="chain" id="PRO_0000406748" description="Pentafunctional AROM polypeptide">
    <location>
        <begin position="1"/>
        <end position="1588"/>
    </location>
</feature>
<feature type="region of interest" description="3-dehydroquinate synthase">
    <location>
        <begin position="1"/>
        <end position="392"/>
    </location>
</feature>
<feature type="region of interest" description="EPSP synthase">
    <location>
        <begin position="405"/>
        <end position="871"/>
    </location>
</feature>
<feature type="region of interest" description="Shikimate kinase">
    <location>
        <begin position="890"/>
        <end position="1080"/>
    </location>
</feature>
<feature type="region of interest" description="3-dehydroquinase">
    <location>
        <begin position="1081"/>
        <end position="1293"/>
    </location>
</feature>
<feature type="region of interest" description="Shikimate dehydrogenase">
    <location>
        <begin position="1306"/>
        <end position="1588"/>
    </location>
</feature>
<feature type="active site" description="Proton acceptor; for 3-dehydroquinate synthase activity" evidence="1">
    <location>
        <position position="268"/>
    </location>
</feature>
<feature type="active site" description="Proton acceptor; for 3-dehydroquinate synthase activity" evidence="1">
    <location>
        <position position="283"/>
    </location>
</feature>
<feature type="active site" description="For EPSP synthase activity" evidence="1">
    <location>
        <position position="853"/>
    </location>
</feature>
<feature type="active site" description="Proton acceptor; for 3-dehydroquinate dehydratase activity" evidence="1">
    <location>
        <position position="1198"/>
    </location>
</feature>
<feature type="active site" description="Schiff-base intermediate with substrate; for 3-dehydroquinate dehydratase activity" evidence="1">
    <location>
        <position position="1227"/>
    </location>
</feature>
<feature type="binding site" evidence="1">
    <location>
        <begin position="43"/>
        <end position="45"/>
    </location>
    <ligand>
        <name>NAD(+)</name>
        <dbReference type="ChEBI" id="CHEBI:57540"/>
    </ligand>
</feature>
<feature type="binding site" evidence="1">
    <location>
        <begin position="78"/>
        <end position="81"/>
    </location>
    <ligand>
        <name>NAD(+)</name>
        <dbReference type="ChEBI" id="CHEBI:57540"/>
    </ligand>
</feature>
<feature type="binding site" evidence="1">
    <location>
        <begin position="109"/>
        <end position="111"/>
    </location>
    <ligand>
        <name>NAD(+)</name>
        <dbReference type="ChEBI" id="CHEBI:57540"/>
    </ligand>
</feature>
<feature type="binding site" evidence="1">
    <location>
        <position position="114"/>
    </location>
    <ligand>
        <name>NAD(+)</name>
        <dbReference type="ChEBI" id="CHEBI:57540"/>
    </ligand>
</feature>
<feature type="binding site" evidence="1">
    <location>
        <position position="125"/>
    </location>
    <ligand>
        <name>7-phospho-2-dehydro-3-deoxy-D-arabino-heptonate</name>
        <dbReference type="ChEBI" id="CHEBI:58394"/>
    </ligand>
</feature>
<feature type="binding site" evidence="1">
    <location>
        <begin position="134"/>
        <end position="135"/>
    </location>
    <ligand>
        <name>NAD(+)</name>
        <dbReference type="ChEBI" id="CHEBI:57540"/>
    </ligand>
</feature>
<feature type="binding site" evidence="1">
    <location>
        <position position="141"/>
    </location>
    <ligand>
        <name>7-phospho-2-dehydro-3-deoxy-D-arabino-heptonate</name>
        <dbReference type="ChEBI" id="CHEBI:58394"/>
    </ligand>
</feature>
<feature type="binding site" evidence="1">
    <location>
        <position position="147"/>
    </location>
    <ligand>
        <name>7-phospho-2-dehydro-3-deoxy-D-arabino-heptonate</name>
        <dbReference type="ChEBI" id="CHEBI:58394"/>
    </ligand>
</feature>
<feature type="binding site" evidence="1">
    <location>
        <position position="156"/>
    </location>
    <ligand>
        <name>NAD(+)</name>
        <dbReference type="ChEBI" id="CHEBI:57540"/>
    </ligand>
</feature>
<feature type="binding site" evidence="1">
    <location>
        <position position="157"/>
    </location>
    <ligand>
        <name>7-phospho-2-dehydro-3-deoxy-D-arabino-heptonate</name>
        <dbReference type="ChEBI" id="CHEBI:58394"/>
    </ligand>
</feature>
<feature type="binding site" evidence="1">
    <location>
        <begin position="174"/>
        <end position="177"/>
    </location>
    <ligand>
        <name>NAD(+)</name>
        <dbReference type="ChEBI" id="CHEBI:57540"/>
    </ligand>
</feature>
<feature type="binding site" evidence="1">
    <location>
        <position position="185"/>
    </location>
    <ligand>
        <name>NAD(+)</name>
        <dbReference type="ChEBI" id="CHEBI:57540"/>
    </ligand>
</feature>
<feature type="binding site" evidence="1">
    <location>
        <begin position="189"/>
        <end position="192"/>
    </location>
    <ligand>
        <name>7-phospho-2-dehydro-3-deoxy-D-arabino-heptonate</name>
        <dbReference type="ChEBI" id="CHEBI:58394"/>
    </ligand>
</feature>
<feature type="binding site" evidence="1">
    <location>
        <position position="189"/>
    </location>
    <ligand>
        <name>Zn(2+)</name>
        <dbReference type="ChEBI" id="CHEBI:29105"/>
        <note>catalytic</note>
    </ligand>
</feature>
<feature type="binding site" evidence="1">
    <location>
        <position position="258"/>
    </location>
    <ligand>
        <name>7-phospho-2-dehydro-3-deoxy-D-arabino-heptonate</name>
        <dbReference type="ChEBI" id="CHEBI:58394"/>
    </ligand>
</feature>
<feature type="binding site" evidence="1">
    <location>
        <begin position="272"/>
        <end position="276"/>
    </location>
    <ligand>
        <name>7-phospho-2-dehydro-3-deoxy-D-arabino-heptonate</name>
        <dbReference type="ChEBI" id="CHEBI:58394"/>
    </ligand>
</feature>
<feature type="binding site" evidence="1">
    <location>
        <position position="279"/>
    </location>
    <ligand>
        <name>7-phospho-2-dehydro-3-deoxy-D-arabino-heptonate</name>
        <dbReference type="ChEBI" id="CHEBI:58394"/>
    </ligand>
</feature>
<feature type="binding site" evidence="1">
    <location>
        <position position="279"/>
    </location>
    <ligand>
        <name>Zn(2+)</name>
        <dbReference type="ChEBI" id="CHEBI:29105"/>
        <note>catalytic</note>
    </ligand>
</feature>
<feature type="binding site" evidence="1">
    <location>
        <position position="295"/>
    </location>
    <ligand>
        <name>7-phospho-2-dehydro-3-deoxy-D-arabino-heptonate</name>
        <dbReference type="ChEBI" id="CHEBI:58394"/>
    </ligand>
</feature>
<feature type="binding site" evidence="1">
    <location>
        <position position="295"/>
    </location>
    <ligand>
        <name>Zn(2+)</name>
        <dbReference type="ChEBI" id="CHEBI:29105"/>
        <note>catalytic</note>
    </ligand>
</feature>
<feature type="binding site" evidence="1">
    <location>
        <position position="364"/>
    </location>
    <ligand>
        <name>7-phospho-2-dehydro-3-deoxy-D-arabino-heptonate</name>
        <dbReference type="ChEBI" id="CHEBI:58394"/>
    </ligand>
</feature>
<feature type="binding site" evidence="1">
    <location>
        <begin position="895"/>
        <end position="902"/>
    </location>
    <ligand>
        <name>ATP</name>
        <dbReference type="ChEBI" id="CHEBI:30616"/>
    </ligand>
</feature>
<protein>
    <recommendedName>
        <fullName evidence="1">Pentafunctional AROM polypeptide</fullName>
    </recommendedName>
    <domain>
        <recommendedName>
            <fullName evidence="1">3-dehydroquinate synthase</fullName>
            <shortName evidence="1">DHQS</shortName>
            <ecNumber evidence="1">4.2.3.4</ecNumber>
        </recommendedName>
    </domain>
    <domain>
        <recommendedName>
            <fullName evidence="1">3-phosphoshikimate 1-carboxyvinyltransferase</fullName>
            <ecNumber evidence="1">2.5.1.19</ecNumber>
        </recommendedName>
        <alternativeName>
            <fullName evidence="1">5-enolpyruvylshikimate-3-phosphate synthase</fullName>
            <shortName evidence="1">EPSP synthase</shortName>
            <shortName evidence="1">EPSPS</shortName>
        </alternativeName>
    </domain>
    <domain>
        <recommendedName>
            <fullName evidence="1">Shikimate kinase</fullName>
            <shortName evidence="1">SK</shortName>
            <ecNumber evidence="1">2.7.1.71</ecNumber>
        </recommendedName>
    </domain>
    <domain>
        <recommendedName>
            <fullName evidence="1">3-dehydroquinate dehydratase</fullName>
            <shortName evidence="1">3-dehydroquinase</shortName>
            <ecNumber evidence="1">4.2.1.10</ecNumber>
        </recommendedName>
    </domain>
    <domain>
        <recommendedName>
            <fullName evidence="1">Shikimate dehydrogenase</fullName>
            <ecNumber evidence="1">1.1.1.25</ecNumber>
        </recommendedName>
    </domain>
</protein>
<comment type="function">
    <text evidence="1">The AROM polypeptide catalyzes 5 consecutive enzymatic reactions in prechorismate polyaromatic amino acid biosynthesis.</text>
</comment>
<comment type="catalytic activity">
    <reaction evidence="1">
        <text>7-phospho-2-dehydro-3-deoxy-D-arabino-heptonate = 3-dehydroquinate + phosphate</text>
        <dbReference type="Rhea" id="RHEA:21968"/>
        <dbReference type="ChEBI" id="CHEBI:32364"/>
        <dbReference type="ChEBI" id="CHEBI:43474"/>
        <dbReference type="ChEBI" id="CHEBI:58394"/>
        <dbReference type="EC" id="4.2.3.4"/>
    </reaction>
</comment>
<comment type="catalytic activity">
    <reaction evidence="1">
        <text>3-dehydroquinate = 3-dehydroshikimate + H2O</text>
        <dbReference type="Rhea" id="RHEA:21096"/>
        <dbReference type="ChEBI" id="CHEBI:15377"/>
        <dbReference type="ChEBI" id="CHEBI:16630"/>
        <dbReference type="ChEBI" id="CHEBI:32364"/>
        <dbReference type="EC" id="4.2.1.10"/>
    </reaction>
</comment>
<comment type="catalytic activity">
    <reaction evidence="1">
        <text>shikimate + NADP(+) = 3-dehydroshikimate + NADPH + H(+)</text>
        <dbReference type="Rhea" id="RHEA:17737"/>
        <dbReference type="ChEBI" id="CHEBI:15378"/>
        <dbReference type="ChEBI" id="CHEBI:16630"/>
        <dbReference type="ChEBI" id="CHEBI:36208"/>
        <dbReference type="ChEBI" id="CHEBI:57783"/>
        <dbReference type="ChEBI" id="CHEBI:58349"/>
        <dbReference type="EC" id="1.1.1.25"/>
    </reaction>
</comment>
<comment type="catalytic activity">
    <reaction evidence="1">
        <text>shikimate + ATP = 3-phosphoshikimate + ADP + H(+)</text>
        <dbReference type="Rhea" id="RHEA:13121"/>
        <dbReference type="ChEBI" id="CHEBI:15378"/>
        <dbReference type="ChEBI" id="CHEBI:30616"/>
        <dbReference type="ChEBI" id="CHEBI:36208"/>
        <dbReference type="ChEBI" id="CHEBI:145989"/>
        <dbReference type="ChEBI" id="CHEBI:456216"/>
        <dbReference type="EC" id="2.7.1.71"/>
    </reaction>
</comment>
<comment type="catalytic activity">
    <reaction evidence="1">
        <text>3-phosphoshikimate + phosphoenolpyruvate = 5-O-(1-carboxyvinyl)-3-phosphoshikimate + phosphate</text>
        <dbReference type="Rhea" id="RHEA:21256"/>
        <dbReference type="ChEBI" id="CHEBI:43474"/>
        <dbReference type="ChEBI" id="CHEBI:57701"/>
        <dbReference type="ChEBI" id="CHEBI:58702"/>
        <dbReference type="ChEBI" id="CHEBI:145989"/>
        <dbReference type="EC" id="2.5.1.19"/>
    </reaction>
</comment>
<comment type="cofactor">
    <cofactor>
        <name>Zn(2+)</name>
        <dbReference type="ChEBI" id="CHEBI:29105"/>
    </cofactor>
    <text>Binds 2 Zn(2+) ions per subunit.</text>
</comment>
<comment type="pathway">
    <text evidence="1">Metabolic intermediate biosynthesis; chorismate biosynthesis; chorismate from D-erythrose 4-phosphate and phosphoenolpyruvate: step 2/7.</text>
</comment>
<comment type="pathway">
    <text evidence="1">Metabolic intermediate biosynthesis; chorismate biosynthesis; chorismate from D-erythrose 4-phosphate and phosphoenolpyruvate: step 3/7.</text>
</comment>
<comment type="pathway">
    <text evidence="1">Metabolic intermediate biosynthesis; chorismate biosynthesis; chorismate from D-erythrose 4-phosphate and phosphoenolpyruvate: step 4/7.</text>
</comment>
<comment type="pathway">
    <text evidence="1">Metabolic intermediate biosynthesis; chorismate biosynthesis; chorismate from D-erythrose 4-phosphate and phosphoenolpyruvate: step 5/7.</text>
</comment>
<comment type="pathway">
    <text evidence="1">Metabolic intermediate biosynthesis; chorismate biosynthesis; chorismate from D-erythrose 4-phosphate and phosphoenolpyruvate: step 6/7.</text>
</comment>
<comment type="subunit">
    <text evidence="1">Homodimer.</text>
</comment>
<comment type="subcellular location">
    <subcellularLocation>
        <location evidence="1">Cytoplasm</location>
    </subcellularLocation>
</comment>
<comment type="similarity">
    <text evidence="1">In the N-terminal section; belongs to the sugar phosphate cyclases superfamily. Dehydroquinate synthase family.</text>
</comment>
<comment type="similarity">
    <text evidence="1">In the 2nd section; belongs to the EPSP synthase family.</text>
</comment>
<comment type="similarity">
    <text evidence="1">In the 3rd section; belongs to the shikimate kinase family.</text>
</comment>
<comment type="similarity">
    <text evidence="1">In the 4th section; belongs to the type-I 3-dehydroquinase family.</text>
</comment>
<comment type="similarity">
    <text evidence="1">In the C-terminal section; belongs to the shikimate dehydrogenase family.</text>
</comment>
<organism>
    <name type="scientific">Saccharomyces cerevisiae (strain RM11-1a)</name>
    <name type="common">Baker's yeast</name>
    <dbReference type="NCBI Taxonomy" id="285006"/>
    <lineage>
        <taxon>Eukaryota</taxon>
        <taxon>Fungi</taxon>
        <taxon>Dikarya</taxon>
        <taxon>Ascomycota</taxon>
        <taxon>Saccharomycotina</taxon>
        <taxon>Saccharomycetes</taxon>
        <taxon>Saccharomycetales</taxon>
        <taxon>Saccharomycetaceae</taxon>
        <taxon>Saccharomyces</taxon>
    </lineage>
</organism>
<name>ARO1_YEAS1</name>
<dbReference type="EC" id="4.2.3.4" evidence="1"/>
<dbReference type="EC" id="2.5.1.19" evidence="1"/>
<dbReference type="EC" id="2.7.1.71" evidence="1"/>
<dbReference type="EC" id="4.2.1.10" evidence="1"/>
<dbReference type="EC" id="1.1.1.25" evidence="1"/>
<dbReference type="EMBL" id="CH408043">
    <property type="protein sequence ID" value="EDV08178.1"/>
    <property type="molecule type" value="Genomic_DNA"/>
</dbReference>
<dbReference type="SMR" id="B3LGE9"/>
<dbReference type="HOGENOM" id="CLU_001201_1_2_1"/>
<dbReference type="OrthoDB" id="21150at4893"/>
<dbReference type="UniPathway" id="UPA00053">
    <property type="reaction ID" value="UER00085"/>
</dbReference>
<dbReference type="UniPathway" id="UPA00053">
    <property type="reaction ID" value="UER00086"/>
</dbReference>
<dbReference type="UniPathway" id="UPA00053">
    <property type="reaction ID" value="UER00087"/>
</dbReference>
<dbReference type="UniPathway" id="UPA00053">
    <property type="reaction ID" value="UER00088"/>
</dbReference>
<dbReference type="UniPathway" id="UPA00053">
    <property type="reaction ID" value="UER00089"/>
</dbReference>
<dbReference type="Proteomes" id="UP000008335">
    <property type="component" value="Unassembled WGS sequence"/>
</dbReference>
<dbReference type="GO" id="GO:0005737">
    <property type="term" value="C:cytoplasm"/>
    <property type="evidence" value="ECO:0007669"/>
    <property type="project" value="UniProtKB-SubCell"/>
</dbReference>
<dbReference type="GO" id="GO:0003855">
    <property type="term" value="F:3-dehydroquinate dehydratase activity"/>
    <property type="evidence" value="ECO:0007669"/>
    <property type="project" value="UniProtKB-UniRule"/>
</dbReference>
<dbReference type="GO" id="GO:0003856">
    <property type="term" value="F:3-dehydroquinate synthase activity"/>
    <property type="evidence" value="ECO:0007669"/>
    <property type="project" value="UniProtKB-UniRule"/>
</dbReference>
<dbReference type="GO" id="GO:0003866">
    <property type="term" value="F:3-phosphoshikimate 1-carboxyvinyltransferase activity"/>
    <property type="evidence" value="ECO:0007669"/>
    <property type="project" value="UniProtKB-UniRule"/>
</dbReference>
<dbReference type="GO" id="GO:0005524">
    <property type="term" value="F:ATP binding"/>
    <property type="evidence" value="ECO:0007669"/>
    <property type="project" value="UniProtKB-UniRule"/>
</dbReference>
<dbReference type="GO" id="GO:0046872">
    <property type="term" value="F:metal ion binding"/>
    <property type="evidence" value="ECO:0007669"/>
    <property type="project" value="UniProtKB-UniRule"/>
</dbReference>
<dbReference type="GO" id="GO:0004764">
    <property type="term" value="F:shikimate 3-dehydrogenase (NADP+) activity"/>
    <property type="evidence" value="ECO:0007669"/>
    <property type="project" value="UniProtKB-UniRule"/>
</dbReference>
<dbReference type="GO" id="GO:0004765">
    <property type="term" value="F:shikimate kinase activity"/>
    <property type="evidence" value="ECO:0007669"/>
    <property type="project" value="UniProtKB-UniRule"/>
</dbReference>
<dbReference type="GO" id="GO:0008652">
    <property type="term" value="P:amino acid biosynthetic process"/>
    <property type="evidence" value="ECO:0007669"/>
    <property type="project" value="UniProtKB-KW"/>
</dbReference>
<dbReference type="GO" id="GO:0009073">
    <property type="term" value="P:aromatic amino acid family biosynthetic process"/>
    <property type="evidence" value="ECO:0007669"/>
    <property type="project" value="UniProtKB-UniRule"/>
</dbReference>
<dbReference type="GO" id="GO:0009423">
    <property type="term" value="P:chorismate biosynthetic process"/>
    <property type="evidence" value="ECO:0007669"/>
    <property type="project" value="UniProtKB-UniRule"/>
</dbReference>
<dbReference type="CDD" id="cd00502">
    <property type="entry name" value="DHQase_I"/>
    <property type="match status" value="1"/>
</dbReference>
<dbReference type="CDD" id="cd08195">
    <property type="entry name" value="DHQS"/>
    <property type="match status" value="1"/>
</dbReference>
<dbReference type="CDD" id="cd01556">
    <property type="entry name" value="EPSP_synthase"/>
    <property type="match status" value="1"/>
</dbReference>
<dbReference type="CDD" id="cd01065">
    <property type="entry name" value="NAD_bind_Shikimate_DH"/>
    <property type="match status" value="1"/>
</dbReference>
<dbReference type="CDD" id="cd00464">
    <property type="entry name" value="SK"/>
    <property type="match status" value="1"/>
</dbReference>
<dbReference type="FunFam" id="1.20.1090.10:FF:000007">
    <property type="entry name" value="Pentafunctional AROM polypeptide"/>
    <property type="match status" value="1"/>
</dbReference>
<dbReference type="FunFam" id="3.20.20.70:FF:000135">
    <property type="entry name" value="Pentafunctional AROM polypeptide"/>
    <property type="match status" value="1"/>
</dbReference>
<dbReference type="FunFam" id="3.40.50.10860:FF:000015">
    <property type="entry name" value="Pentafunctional AROM polypeptide"/>
    <property type="match status" value="1"/>
</dbReference>
<dbReference type="FunFam" id="3.40.50.1970:FF:000007">
    <property type="entry name" value="Pentafunctional AROM polypeptide"/>
    <property type="match status" value="1"/>
</dbReference>
<dbReference type="FunFam" id="3.40.50.300:FF:001256">
    <property type="entry name" value="Pentafunctional AROM polypeptide"/>
    <property type="match status" value="1"/>
</dbReference>
<dbReference type="FunFam" id="3.40.50.720:FF:000484">
    <property type="entry name" value="Pentafunctional AROM polypeptide"/>
    <property type="match status" value="1"/>
</dbReference>
<dbReference type="FunFam" id="3.65.10.10:FF:000007">
    <property type="entry name" value="Pentafunctional AROM polypeptide"/>
    <property type="match status" value="1"/>
</dbReference>
<dbReference type="FunFam" id="3.65.10.10:FF:000008">
    <property type="entry name" value="Pentafunctional AROM polypeptide"/>
    <property type="match status" value="1"/>
</dbReference>
<dbReference type="Gene3D" id="3.40.50.1970">
    <property type="match status" value="1"/>
</dbReference>
<dbReference type="Gene3D" id="3.20.20.70">
    <property type="entry name" value="Aldolase class I"/>
    <property type="match status" value="1"/>
</dbReference>
<dbReference type="Gene3D" id="1.20.1090.10">
    <property type="entry name" value="Dehydroquinate synthase-like - alpha domain"/>
    <property type="match status" value="1"/>
</dbReference>
<dbReference type="Gene3D" id="3.65.10.10">
    <property type="entry name" value="Enolpyruvate transferase domain"/>
    <property type="match status" value="2"/>
</dbReference>
<dbReference type="Gene3D" id="3.40.50.10860">
    <property type="entry name" value="Leucine Dehydrogenase, chain A, domain 1"/>
    <property type="match status" value="1"/>
</dbReference>
<dbReference type="Gene3D" id="3.40.50.720">
    <property type="entry name" value="NAD(P)-binding Rossmann-like Domain"/>
    <property type="match status" value="1"/>
</dbReference>
<dbReference type="Gene3D" id="3.40.50.300">
    <property type="entry name" value="P-loop containing nucleotide triphosphate hydrolases"/>
    <property type="match status" value="1"/>
</dbReference>
<dbReference type="HAMAP" id="MF_00210">
    <property type="entry name" value="EPSP_synth"/>
    <property type="match status" value="1"/>
</dbReference>
<dbReference type="HAMAP" id="MF_03143">
    <property type="entry name" value="Pentafunct_AroM"/>
    <property type="match status" value="1"/>
</dbReference>
<dbReference type="HAMAP" id="MF_00109">
    <property type="entry name" value="Shikimate_kinase"/>
    <property type="match status" value="1"/>
</dbReference>
<dbReference type="InterPro" id="IPR018508">
    <property type="entry name" value="3-dehydroquinate_DH_AS"/>
</dbReference>
<dbReference type="InterPro" id="IPR013785">
    <property type="entry name" value="Aldolase_TIM"/>
</dbReference>
<dbReference type="InterPro" id="IPR046346">
    <property type="entry name" value="Aminoacid_DH-like_N_sf"/>
</dbReference>
<dbReference type="InterPro" id="IPR016037">
    <property type="entry name" value="DHQ_synth_AroB"/>
</dbReference>
<dbReference type="InterPro" id="IPR030960">
    <property type="entry name" value="DHQS/DOIS_N"/>
</dbReference>
<dbReference type="InterPro" id="IPR056179">
    <property type="entry name" value="DHQS_C"/>
</dbReference>
<dbReference type="InterPro" id="IPR001381">
    <property type="entry name" value="DHquinase_I"/>
</dbReference>
<dbReference type="InterPro" id="IPR001986">
    <property type="entry name" value="Enolpyruvate_Tfrase_dom"/>
</dbReference>
<dbReference type="InterPro" id="IPR036968">
    <property type="entry name" value="Enolpyruvate_Tfrase_sf"/>
</dbReference>
<dbReference type="InterPro" id="IPR006264">
    <property type="entry name" value="EPSP_synthase"/>
</dbReference>
<dbReference type="InterPro" id="IPR023193">
    <property type="entry name" value="EPSP_synthase_CS"/>
</dbReference>
<dbReference type="InterPro" id="IPR036291">
    <property type="entry name" value="NAD(P)-bd_dom_sf"/>
</dbReference>
<dbReference type="InterPro" id="IPR027417">
    <property type="entry name" value="P-loop_NTPase"/>
</dbReference>
<dbReference type="InterPro" id="IPR008289">
    <property type="entry name" value="Pentafunct_AroM"/>
</dbReference>
<dbReference type="InterPro" id="IPR013792">
    <property type="entry name" value="RNA3'P_cycl/enolpyr_Trfase_a/b"/>
</dbReference>
<dbReference type="InterPro" id="IPR041121">
    <property type="entry name" value="SDH_C"/>
</dbReference>
<dbReference type="InterPro" id="IPR031322">
    <property type="entry name" value="Shikimate/glucono_kinase"/>
</dbReference>
<dbReference type="InterPro" id="IPR013708">
    <property type="entry name" value="Shikimate_DH-bd_N"/>
</dbReference>
<dbReference type="InterPro" id="IPR010110">
    <property type="entry name" value="Shikimate_DH_AroM-type"/>
</dbReference>
<dbReference type="InterPro" id="IPR000623">
    <property type="entry name" value="Shikimate_kinase/TSH1"/>
</dbReference>
<dbReference type="InterPro" id="IPR023000">
    <property type="entry name" value="Shikimate_kinase_CS"/>
</dbReference>
<dbReference type="InterPro" id="IPR006151">
    <property type="entry name" value="Shikm_DH/Glu-tRNA_Rdtase"/>
</dbReference>
<dbReference type="NCBIfam" id="TIGR01356">
    <property type="entry name" value="aroA"/>
    <property type="match status" value="1"/>
</dbReference>
<dbReference type="NCBIfam" id="TIGR01357">
    <property type="entry name" value="aroB"/>
    <property type="match status" value="1"/>
</dbReference>
<dbReference type="NCBIfam" id="TIGR01093">
    <property type="entry name" value="aroD"/>
    <property type="match status" value="1"/>
</dbReference>
<dbReference type="NCBIfam" id="TIGR01809">
    <property type="entry name" value="Shik-DH-AROM"/>
    <property type="match status" value="1"/>
</dbReference>
<dbReference type="PANTHER" id="PTHR21090">
    <property type="entry name" value="AROM/DEHYDROQUINATE SYNTHASE"/>
    <property type="match status" value="1"/>
</dbReference>
<dbReference type="PANTHER" id="PTHR21090:SF5">
    <property type="entry name" value="PENTAFUNCTIONAL AROM POLYPEPTIDE"/>
    <property type="match status" value="1"/>
</dbReference>
<dbReference type="Pfam" id="PF01761">
    <property type="entry name" value="DHQ_synthase"/>
    <property type="match status" value="1"/>
</dbReference>
<dbReference type="Pfam" id="PF24621">
    <property type="entry name" value="DHQS_C"/>
    <property type="match status" value="1"/>
</dbReference>
<dbReference type="Pfam" id="PF01487">
    <property type="entry name" value="DHquinase_I"/>
    <property type="match status" value="1"/>
</dbReference>
<dbReference type="Pfam" id="PF00275">
    <property type="entry name" value="EPSP_synthase"/>
    <property type="match status" value="1"/>
</dbReference>
<dbReference type="Pfam" id="PF18317">
    <property type="entry name" value="SDH_C"/>
    <property type="match status" value="1"/>
</dbReference>
<dbReference type="Pfam" id="PF01488">
    <property type="entry name" value="Shikimate_DH"/>
    <property type="match status" value="1"/>
</dbReference>
<dbReference type="Pfam" id="PF08501">
    <property type="entry name" value="Shikimate_dh_N"/>
    <property type="match status" value="1"/>
</dbReference>
<dbReference type="Pfam" id="PF01202">
    <property type="entry name" value="SKI"/>
    <property type="match status" value="1"/>
</dbReference>
<dbReference type="PIRSF" id="PIRSF000514">
    <property type="entry name" value="Pentafunct_AroM"/>
    <property type="match status" value="1"/>
</dbReference>
<dbReference type="PRINTS" id="PR01100">
    <property type="entry name" value="SHIKIMTKNASE"/>
</dbReference>
<dbReference type="SUPFAM" id="SSF51569">
    <property type="entry name" value="Aldolase"/>
    <property type="match status" value="1"/>
</dbReference>
<dbReference type="SUPFAM" id="SSF53223">
    <property type="entry name" value="Aminoacid dehydrogenase-like, N-terminal domain"/>
    <property type="match status" value="1"/>
</dbReference>
<dbReference type="SUPFAM" id="SSF56796">
    <property type="entry name" value="Dehydroquinate synthase-like"/>
    <property type="match status" value="1"/>
</dbReference>
<dbReference type="SUPFAM" id="SSF55205">
    <property type="entry name" value="EPT/RTPC-like"/>
    <property type="match status" value="1"/>
</dbReference>
<dbReference type="SUPFAM" id="SSF51735">
    <property type="entry name" value="NAD(P)-binding Rossmann-fold domains"/>
    <property type="match status" value="1"/>
</dbReference>
<dbReference type="SUPFAM" id="SSF52540">
    <property type="entry name" value="P-loop containing nucleoside triphosphate hydrolases"/>
    <property type="match status" value="1"/>
</dbReference>
<dbReference type="PROSITE" id="PS01028">
    <property type="entry name" value="DEHYDROQUINASE_I"/>
    <property type="match status" value="1"/>
</dbReference>
<dbReference type="PROSITE" id="PS00104">
    <property type="entry name" value="EPSP_SYNTHASE_1"/>
    <property type="match status" value="1"/>
</dbReference>
<dbReference type="PROSITE" id="PS00885">
    <property type="entry name" value="EPSP_SYNTHASE_2"/>
    <property type="match status" value="1"/>
</dbReference>
<dbReference type="PROSITE" id="PS01128">
    <property type="entry name" value="SHIKIMATE_KINASE"/>
    <property type="match status" value="1"/>
</dbReference>
<sequence length="1588" mass="174767">MVQLAKVPILGNDIIHVGYNIHDHLVETIIKHCPSSTYVICNDTNLSKVPYYQQLVLEFKASLPEGSRLLTYVVKPGETSKSRETKAQLEDYLLVEGCTRDTVMVAIGGGVIGDMIGFVASTFMRGVRVVQVPTSLLAMVDSSIGGKTAIDTPLGKNFIGAFWQPKFVLVDIKWLETLAKREFINGMAEVIKTACIWNADEFTRLESNASLFLNVVNGEKNVKVTNQLTNEIDEISNTDIEAMLDHTYKLVLESIKVKAEVVSSDERESSLRNLLNFGHSIGHAYEAILTPQALHGECVSIGMVKEAELSRYFGILSPTQVARLSKILVAYGLPVSPDEKWFKELTLHKKTPLDILLKKMSIDKKNEGSKKKVVILESIGKCYGDSAQFVSDEDLRFILTDETLVYPFKDIPADQQKVVIPPGSKSISNRALILAALGEGQCKIKNLLHSDDTKHMLTAVHELKGATISWEDNGETVVVEGHGGSTLSACADPLYLGNAGTASRFLTSLAALVNSTPSQKYIVLTGNARMQQRPIAPLVDSLRANGTKIEYLNNEGSLPIKVYTDSVFKGGRIELAATVSSQYVSSILMCAPYAEEPVTLALVGGKPISKLYVDMTIKMMEKFGINVETSTTEPYTYYIPKGHYINPSEYVIESDASSATYPLAFAAMTGTTVTVPNIGFESLQGDARFARDVLKPMGCKITQTATSTTVSGPPVGTLKPLKHVDMEPMTDAFLTACVVAAISHDSDPNSANTTTIEGIANQRVKECNRILAMATELAKFGVKTTELPDGIQVHGLNSIKDLKVPSDSSGPVGVCTYDDHRVAMSFSLLAGMVNSQNERDEVANPVRILERHCTGKTWPGWWDVLHSELGAKLDGAEPLECTSKKNSKKSVVIIGMRAAGKTTISKWCASALGYKLVDLDELFEQQHNNQSVKQFVVENGWEKFREEETRIFKEVIQNYGDDGYVFSTGGGIVESAESRKALKDFASSGGYVLHLHRDIEETIVFLQSDPSRPAYVEEIREVWNRREGWYKECSNFSFFAPHCSAEAEFQALRRSFSKYIATITGVREIEIPSGRSAFVCLTFDDLTEQTENLTPICYGCEAVEVRVDHLANYSADFVSKQLSILRKATDSIPIIFTVRTMKQGGNFLDEEFKTLRELYDIALKNGVEFLDLELTLPTDIQYEVINKRGNTKIIGSHHDFQGLYSWDDAEWENRFNQALTLDVDVVKFVGTAVNFEDNLRLEHFRDTHKNKPLIAVNMTSKGSISRVLNNVLTPVTSDLLPNSAAPGQLTVAQINKMYTSMGGIEPKELFVVGKPIGHSRSPILHNTGYEILGLPHKFDKFETGSAQLVKEKLLDGNKNFGGAAVTIPLKLDIMQYMDELTDAAKVIGAVNTVIPLGNKKFKGDNTDWLGIRNALINNGVPEYVGHTAGLVIGAGGTSRAALYALHSLGCKKIFIINRTTSKLKPLIESLPSEFNIIGIESTKSIEEIKEHVGVAVSCVPADKPLDDELLSKLERFLVKGAHAAFVPTLLEAAYKPSVTPVMTISQDKYQWHVVPGSQMLVHQGVAQFEKWTGFKGPFKAIFDAVTKE</sequence>
<proteinExistence type="inferred from homology"/>
<reference key="1">
    <citation type="submission" date="2005-03" db="EMBL/GenBank/DDBJ databases">
        <title>Annotation of the Saccharomyces cerevisiae RM11-1a genome.</title>
        <authorList>
            <consortium name="The Broad Institute Genome Sequencing Platform"/>
            <person name="Birren B.W."/>
            <person name="Lander E.S."/>
            <person name="Galagan J.E."/>
            <person name="Nusbaum C."/>
            <person name="Devon K."/>
            <person name="Cuomo C."/>
            <person name="Jaffe D.B."/>
            <person name="Butler J."/>
            <person name="Alvarez P."/>
            <person name="Gnerre S."/>
            <person name="Grabherr M."/>
            <person name="Kleber M."/>
            <person name="Mauceli E.W."/>
            <person name="Brockman W."/>
            <person name="MacCallum I.A."/>
            <person name="Rounsley S."/>
            <person name="Young S.K."/>
            <person name="LaButti K."/>
            <person name="Pushparaj V."/>
            <person name="DeCaprio D."/>
            <person name="Crawford M."/>
            <person name="Koehrsen M."/>
            <person name="Engels R."/>
            <person name="Montgomery P."/>
            <person name="Pearson M."/>
            <person name="Howarth C."/>
            <person name="Larson L."/>
            <person name="Luoma S."/>
            <person name="White J."/>
            <person name="O'Leary S."/>
            <person name="Kodira C.D."/>
            <person name="Zeng Q."/>
            <person name="Yandava C."/>
            <person name="Alvarado L."/>
            <person name="Pratt S."/>
            <person name="Kruglyak L."/>
        </authorList>
    </citation>
    <scope>NUCLEOTIDE SEQUENCE [LARGE SCALE GENOMIC DNA]</scope>
    <source>
        <strain>RM11-1a</strain>
    </source>
</reference>